<sequence>MMPIPANPTNASIQPRSLYDAWADLAWRAMLTEVNLSPKPGLVDRLNCGAHKDMALADFHRSAEAIRHWLPRFMEYGASCTRLPPESVLAGLRPLGMACEAAMFRATAGVNTHKGSIFSLGLLCAAIGRLYQLRQPIAAETLCATAADFCRGLTTRELRQNNLLLTAGQRLYQQQGLTGARGEAEAGYPLVIRHALPHYRALLAQGRDPDLALLDTLLLLMSLNGDTNVASRGGADGLRWLQQHAAFLLHQGGIRTPDDLVYLHRFDQQCIERNLSPGGSADLLIVTWFLAQISQVNH</sequence>
<dbReference type="EC" id="2.4.2.52" evidence="1"/>
<dbReference type="EMBL" id="CP000026">
    <property type="protein sequence ID" value="AAV78008.1"/>
    <property type="molecule type" value="Genomic_DNA"/>
</dbReference>
<dbReference type="KEGG" id="spt:SPA2115"/>
<dbReference type="HOGENOM" id="CLU_056179_1_0_6"/>
<dbReference type="Proteomes" id="UP000008185">
    <property type="component" value="Chromosome"/>
</dbReference>
<dbReference type="GO" id="GO:0005524">
    <property type="term" value="F:ATP binding"/>
    <property type="evidence" value="ECO:0007669"/>
    <property type="project" value="UniProtKB-KW"/>
</dbReference>
<dbReference type="GO" id="GO:0046917">
    <property type="term" value="F:triphosphoribosyl-dephospho-CoA synthase activity"/>
    <property type="evidence" value="ECO:0007669"/>
    <property type="project" value="UniProtKB-UniRule"/>
</dbReference>
<dbReference type="GO" id="GO:0051191">
    <property type="term" value="P:prosthetic group biosynthetic process"/>
    <property type="evidence" value="ECO:0007669"/>
    <property type="project" value="TreeGrafter"/>
</dbReference>
<dbReference type="FunFam" id="1.10.4200.10:FF:000001">
    <property type="entry name" value="Triphosphoribosyl-dephospho-CoA synthase CitG"/>
    <property type="match status" value="1"/>
</dbReference>
<dbReference type="Gene3D" id="1.10.4200.10">
    <property type="entry name" value="Triphosphoribosyl-dephospho-CoA protein"/>
    <property type="match status" value="1"/>
</dbReference>
<dbReference type="HAMAP" id="MF_00397">
    <property type="entry name" value="CitG"/>
    <property type="match status" value="1"/>
</dbReference>
<dbReference type="InterPro" id="IPR002736">
    <property type="entry name" value="CitG"/>
</dbReference>
<dbReference type="InterPro" id="IPR017551">
    <property type="entry name" value="TriPribosyl-deP-CoA_syn_CitG"/>
</dbReference>
<dbReference type="NCBIfam" id="TIGR03125">
    <property type="entry name" value="citrate_citG"/>
    <property type="match status" value="1"/>
</dbReference>
<dbReference type="NCBIfam" id="NF007503">
    <property type="entry name" value="PRK10096.1"/>
    <property type="match status" value="1"/>
</dbReference>
<dbReference type="PANTHER" id="PTHR30201:SF2">
    <property type="entry name" value="2-(5''-TRIPHOSPHORIBOSYL)-3'-DEPHOSPHOCOENZYME-A SYNTHASE"/>
    <property type="match status" value="1"/>
</dbReference>
<dbReference type="PANTHER" id="PTHR30201">
    <property type="entry name" value="TRIPHOSPHORIBOSYL-DEPHOSPHO-COA SYNTHASE"/>
    <property type="match status" value="1"/>
</dbReference>
<dbReference type="Pfam" id="PF01874">
    <property type="entry name" value="CitG"/>
    <property type="match status" value="1"/>
</dbReference>
<keyword id="KW-0067">ATP-binding</keyword>
<keyword id="KW-0547">Nucleotide-binding</keyword>
<keyword id="KW-0808">Transferase</keyword>
<reference key="1">
    <citation type="journal article" date="2004" name="Nat. Genet.">
        <title>Comparison of genome degradation in Paratyphi A and Typhi, human-restricted serovars of Salmonella enterica that cause typhoid.</title>
        <authorList>
            <person name="McClelland M."/>
            <person name="Sanderson K.E."/>
            <person name="Clifton S.W."/>
            <person name="Latreille P."/>
            <person name="Porwollik S."/>
            <person name="Sabo A."/>
            <person name="Meyer R."/>
            <person name="Bieri T."/>
            <person name="Ozersky P."/>
            <person name="McLellan M."/>
            <person name="Harkins C.R."/>
            <person name="Wang C."/>
            <person name="Nguyen C."/>
            <person name="Berghoff A."/>
            <person name="Elliott G."/>
            <person name="Kohlberg S."/>
            <person name="Strong C."/>
            <person name="Du F."/>
            <person name="Carter J."/>
            <person name="Kremizki C."/>
            <person name="Layman D."/>
            <person name="Leonard S."/>
            <person name="Sun H."/>
            <person name="Fulton L."/>
            <person name="Nash W."/>
            <person name="Miner T."/>
            <person name="Minx P."/>
            <person name="Delehaunty K."/>
            <person name="Fronick C."/>
            <person name="Magrini V."/>
            <person name="Nhan M."/>
            <person name="Warren W."/>
            <person name="Florea L."/>
            <person name="Spieth J."/>
            <person name="Wilson R.K."/>
        </authorList>
    </citation>
    <scope>NUCLEOTIDE SEQUENCE [LARGE SCALE GENOMIC DNA]</scope>
    <source>
        <strain>ATCC 9150 / SARB42</strain>
    </source>
</reference>
<protein>
    <recommendedName>
        <fullName evidence="1">Probable 2-(5''-triphosphoribosyl)-3'-dephosphocoenzyme-A synthase 2</fullName>
        <shortName evidence="1">2-(5''-triphosphoribosyl)-3'-dephospho-CoA synthase 2</shortName>
        <ecNumber evidence="1">2.4.2.52</ecNumber>
    </recommendedName>
</protein>
<proteinExistence type="inferred from homology"/>
<evidence type="ECO:0000255" key="1">
    <source>
        <dbReference type="HAMAP-Rule" id="MF_00397"/>
    </source>
</evidence>
<name>CITG2_SALPA</name>
<gene>
    <name evidence="1" type="primary">citG2</name>
    <name type="ordered locus">SPA2115</name>
</gene>
<comment type="catalytic activity">
    <reaction evidence="1">
        <text>3'-dephospho-CoA + ATP = 2'-(5''-triphospho-alpha-D-ribosyl)-3'-dephospho-CoA + adenine</text>
        <dbReference type="Rhea" id="RHEA:15117"/>
        <dbReference type="ChEBI" id="CHEBI:16708"/>
        <dbReference type="ChEBI" id="CHEBI:30616"/>
        <dbReference type="ChEBI" id="CHEBI:57328"/>
        <dbReference type="ChEBI" id="CHEBI:61378"/>
        <dbReference type="EC" id="2.4.2.52"/>
    </reaction>
</comment>
<comment type="similarity">
    <text evidence="1">Belongs to the CitG/MdcB family.</text>
</comment>
<accession>Q5PMA7</accession>
<organism>
    <name type="scientific">Salmonella paratyphi A (strain ATCC 9150 / SARB42)</name>
    <dbReference type="NCBI Taxonomy" id="295319"/>
    <lineage>
        <taxon>Bacteria</taxon>
        <taxon>Pseudomonadati</taxon>
        <taxon>Pseudomonadota</taxon>
        <taxon>Gammaproteobacteria</taxon>
        <taxon>Enterobacterales</taxon>
        <taxon>Enterobacteriaceae</taxon>
        <taxon>Salmonella</taxon>
    </lineage>
</organism>
<feature type="chain" id="PRO_0000255410" description="Probable 2-(5''-triphosphoribosyl)-3'-dephosphocoenzyme-A synthase 2">
    <location>
        <begin position="1"/>
        <end position="298"/>
    </location>
</feature>